<organism>
    <name type="scientific">Vibrio vulnificus (strain YJ016)</name>
    <dbReference type="NCBI Taxonomy" id="196600"/>
    <lineage>
        <taxon>Bacteria</taxon>
        <taxon>Pseudomonadati</taxon>
        <taxon>Pseudomonadota</taxon>
        <taxon>Gammaproteobacteria</taxon>
        <taxon>Vibrionales</taxon>
        <taxon>Vibrionaceae</taxon>
        <taxon>Vibrio</taxon>
    </lineage>
</organism>
<name>PHS_VIBVY</name>
<reference key="1">
    <citation type="journal article" date="2003" name="Genome Res.">
        <title>Comparative genome analysis of Vibrio vulnificus, a marine pathogen.</title>
        <authorList>
            <person name="Chen C.-Y."/>
            <person name="Wu K.-M."/>
            <person name="Chang Y.-C."/>
            <person name="Chang C.-H."/>
            <person name="Tsai H.-C."/>
            <person name="Liao T.-L."/>
            <person name="Liu Y.-M."/>
            <person name="Chen H.-J."/>
            <person name="Shen A.B.-T."/>
            <person name="Li J.-C."/>
            <person name="Su T.-L."/>
            <person name="Shao C.-P."/>
            <person name="Lee C.-T."/>
            <person name="Hor L.-I."/>
            <person name="Tsai S.-F."/>
        </authorList>
    </citation>
    <scope>NUCLEOTIDE SEQUENCE [LARGE SCALE GENOMIC DNA]</scope>
    <source>
        <strain>YJ016</strain>
    </source>
</reference>
<gene>
    <name type="ordered locus">VVA1004</name>
</gene>
<protein>
    <recommendedName>
        <fullName evidence="1">Putative pterin-4-alpha-carbinolamine dehydratase</fullName>
        <shortName evidence="1">PHS</shortName>
        <ecNumber evidence="1">4.2.1.96</ecNumber>
    </recommendedName>
    <alternativeName>
        <fullName evidence="1">4-alpha-hydroxy-tetrahydropterin dehydratase</fullName>
    </alternativeName>
    <alternativeName>
        <fullName evidence="1">Pterin carbinolamine dehydratase</fullName>
        <shortName evidence="1">PCD</shortName>
    </alternativeName>
</protein>
<accession>Q7MDN2</accession>
<keyword id="KW-0456">Lyase</keyword>
<comment type="catalytic activity">
    <reaction evidence="1">
        <text>(4aS,6R)-4a-hydroxy-L-erythro-5,6,7,8-tetrahydrobiopterin = (6R)-L-erythro-6,7-dihydrobiopterin + H2O</text>
        <dbReference type="Rhea" id="RHEA:11920"/>
        <dbReference type="ChEBI" id="CHEBI:15377"/>
        <dbReference type="ChEBI" id="CHEBI:15642"/>
        <dbReference type="ChEBI" id="CHEBI:43120"/>
        <dbReference type="EC" id="4.2.1.96"/>
    </reaction>
</comment>
<comment type="similarity">
    <text evidence="1">Belongs to the pterin-4-alpha-carbinolamine dehydratase family.</text>
</comment>
<dbReference type="EC" id="4.2.1.96" evidence="1"/>
<dbReference type="EMBL" id="BA000038">
    <property type="protein sequence ID" value="BAC97030.1"/>
    <property type="molecule type" value="Genomic_DNA"/>
</dbReference>
<dbReference type="RefSeq" id="WP_011081408.1">
    <property type="nucleotide sequence ID" value="NC_005140.1"/>
</dbReference>
<dbReference type="SMR" id="Q7MDN2"/>
<dbReference type="STRING" id="672.VV93_v1c39500"/>
<dbReference type="KEGG" id="vvy:VVA1004"/>
<dbReference type="eggNOG" id="COG2154">
    <property type="taxonomic scope" value="Bacteria"/>
</dbReference>
<dbReference type="HOGENOM" id="CLU_081974_2_2_6"/>
<dbReference type="Proteomes" id="UP000002675">
    <property type="component" value="Chromosome II"/>
</dbReference>
<dbReference type="GO" id="GO:0008124">
    <property type="term" value="F:4-alpha-hydroxytetrahydrobiopterin dehydratase activity"/>
    <property type="evidence" value="ECO:0007669"/>
    <property type="project" value="UniProtKB-UniRule"/>
</dbReference>
<dbReference type="GO" id="GO:0006729">
    <property type="term" value="P:tetrahydrobiopterin biosynthetic process"/>
    <property type="evidence" value="ECO:0007669"/>
    <property type="project" value="InterPro"/>
</dbReference>
<dbReference type="CDD" id="cd00913">
    <property type="entry name" value="PCD_DCoH_subfamily_a"/>
    <property type="match status" value="1"/>
</dbReference>
<dbReference type="Gene3D" id="3.30.1360.20">
    <property type="entry name" value="Transcriptional coactivator/pterin dehydratase"/>
    <property type="match status" value="1"/>
</dbReference>
<dbReference type="HAMAP" id="MF_00434">
    <property type="entry name" value="Pterin_4_alpha"/>
    <property type="match status" value="1"/>
</dbReference>
<dbReference type="InterPro" id="IPR036428">
    <property type="entry name" value="PCD_sf"/>
</dbReference>
<dbReference type="InterPro" id="IPR050376">
    <property type="entry name" value="Pterin-4-alpha-carb_dehyd"/>
</dbReference>
<dbReference type="InterPro" id="IPR001533">
    <property type="entry name" value="Pterin_deHydtase"/>
</dbReference>
<dbReference type="NCBIfam" id="NF002016">
    <property type="entry name" value="PRK00823.1-1"/>
    <property type="match status" value="1"/>
</dbReference>
<dbReference type="PANTHER" id="PTHR42805">
    <property type="entry name" value="PTERIN-4-ALPHA-CARBINOLAMINE DEHYDRATASE-RELATED"/>
    <property type="match status" value="1"/>
</dbReference>
<dbReference type="PANTHER" id="PTHR42805:SF1">
    <property type="entry name" value="PTERIN-4-ALPHA-CARBINOLAMINE DEHYDRATASE-RELATED"/>
    <property type="match status" value="1"/>
</dbReference>
<dbReference type="Pfam" id="PF01329">
    <property type="entry name" value="Pterin_4a"/>
    <property type="match status" value="1"/>
</dbReference>
<dbReference type="SUPFAM" id="SSF55248">
    <property type="entry name" value="PCD-like"/>
    <property type="match status" value="1"/>
</dbReference>
<proteinExistence type="inferred from homology"/>
<feature type="chain" id="PRO_0000063104" description="Putative pterin-4-alpha-carbinolamine dehydratase">
    <location>
        <begin position="1"/>
        <end position="110"/>
    </location>
</feature>
<sequence>MLDELKCEACSIDAIALTTQQQQELLLELEGWHLMEREGIPQLEKVYKFKNFMQAWQFSNQVAELAEQEFHHPSILLEWGKVTVTWWSHSIKGLHKNDFICAAKCDQIIR</sequence>
<evidence type="ECO:0000255" key="1">
    <source>
        <dbReference type="HAMAP-Rule" id="MF_00434"/>
    </source>
</evidence>